<sequence length="600" mass="63618">MTKLTRFSVAPLHAMTRRLADVASGRVAPEFVITGARVLSTYSERILPNRELWITGGRVAAVKPAGAHKALGGGFAIYDAADGIIAPGLVDPHIHIESSMVTACAYAEAALLNGTTTIFCDSHEIGNVMDVAGVEAMLEDARQAPLSIFLTVPSTVPATSAALETAGGDLTPDKIADLFDRWPEAVALGEKMDFVPVCMGDERSHAILAAALQRGRPVSGHVYGREFVAAYAASGVTDTHEAIDRDIADDLLDAGVWIFLRGGPPTTPWHSLPQAIRTITELGASHKRTAVCTDDRDADDLMLFGLDWVVREAVKAGMSPEQAWSMGSLHGATRFAMDGEIGGLGGGRRADLVLLDDGLKPQSTWYGGELVVENGKITPRLDQALSQRYQYPKAAYATVKLPAQVKLTPELPTKACTVNAIKTALPGITLIHDKVAIAPASDWPTLFARHGLCFVAVIERHGKSAGNVAHGLLKDFGLTRGAVASSVGHDSHNIIVAGTNEADMQVAVAAIGSHQGGVCVVADGKVRAMVPLPIAGLLSDKRITEVAEEVKLLKTEWAAAGCTIPYMGFNLIPLSVIPEIRITDKGLVLVPQMELTPLFE</sequence>
<protein>
    <recommendedName>
        <fullName evidence="1">Adenine deaminase</fullName>
        <shortName evidence="1">Adenase</shortName>
        <shortName evidence="1">Adenine aminase</shortName>
        <ecNumber evidence="1">3.5.4.2</ecNumber>
    </recommendedName>
</protein>
<name>ADEC_BRASB</name>
<dbReference type="EC" id="3.5.4.2" evidence="1"/>
<dbReference type="EMBL" id="CP000494">
    <property type="protein sequence ID" value="ABQ35236.1"/>
    <property type="molecule type" value="Genomic_DNA"/>
</dbReference>
<dbReference type="RefSeq" id="WP_012043254.1">
    <property type="nucleotide sequence ID" value="NC_009485.1"/>
</dbReference>
<dbReference type="SMR" id="A5EGE2"/>
<dbReference type="STRING" id="288000.BBta_3118"/>
<dbReference type="KEGG" id="bbt:BBta_3118"/>
<dbReference type="eggNOG" id="COG1001">
    <property type="taxonomic scope" value="Bacteria"/>
</dbReference>
<dbReference type="HOGENOM" id="CLU_027935_0_0_5"/>
<dbReference type="OrthoDB" id="9775607at2"/>
<dbReference type="Proteomes" id="UP000000246">
    <property type="component" value="Chromosome"/>
</dbReference>
<dbReference type="GO" id="GO:0000034">
    <property type="term" value="F:adenine deaminase activity"/>
    <property type="evidence" value="ECO:0007669"/>
    <property type="project" value="UniProtKB-UniRule"/>
</dbReference>
<dbReference type="GO" id="GO:0006146">
    <property type="term" value="P:adenine catabolic process"/>
    <property type="evidence" value="ECO:0007669"/>
    <property type="project" value="InterPro"/>
</dbReference>
<dbReference type="CDD" id="cd01295">
    <property type="entry name" value="AdeC"/>
    <property type="match status" value="1"/>
</dbReference>
<dbReference type="FunFam" id="3.20.20.140:FF:000061">
    <property type="entry name" value="Adenine deaminase"/>
    <property type="match status" value="1"/>
</dbReference>
<dbReference type="Gene3D" id="3.20.20.140">
    <property type="entry name" value="Metal-dependent hydrolases"/>
    <property type="match status" value="1"/>
</dbReference>
<dbReference type="Gene3D" id="2.30.40.10">
    <property type="entry name" value="Urease, subunit C, domain 1"/>
    <property type="match status" value="1"/>
</dbReference>
<dbReference type="HAMAP" id="MF_01518">
    <property type="entry name" value="Adenine_deamin"/>
    <property type="match status" value="1"/>
</dbReference>
<dbReference type="InterPro" id="IPR006679">
    <property type="entry name" value="Adenine_deam"/>
</dbReference>
<dbReference type="InterPro" id="IPR026912">
    <property type="entry name" value="Adenine_deam_C"/>
</dbReference>
<dbReference type="InterPro" id="IPR006680">
    <property type="entry name" value="Amidohydro-rel"/>
</dbReference>
<dbReference type="InterPro" id="IPR011059">
    <property type="entry name" value="Metal-dep_hydrolase_composite"/>
</dbReference>
<dbReference type="InterPro" id="IPR032466">
    <property type="entry name" value="Metal_Hydrolase"/>
</dbReference>
<dbReference type="PANTHER" id="PTHR11113:SF2">
    <property type="entry name" value="ADENINE DEAMINASE"/>
    <property type="match status" value="1"/>
</dbReference>
<dbReference type="PANTHER" id="PTHR11113">
    <property type="entry name" value="N-ACETYLGLUCOSAMINE-6-PHOSPHATE DEACETYLASE"/>
    <property type="match status" value="1"/>
</dbReference>
<dbReference type="Pfam" id="PF13382">
    <property type="entry name" value="Adenine_deam_C"/>
    <property type="match status" value="1"/>
</dbReference>
<dbReference type="Pfam" id="PF01979">
    <property type="entry name" value="Amidohydro_1"/>
    <property type="match status" value="1"/>
</dbReference>
<dbReference type="SUPFAM" id="SSF51338">
    <property type="entry name" value="Composite domain of metallo-dependent hydrolases"/>
    <property type="match status" value="1"/>
</dbReference>
<dbReference type="SUPFAM" id="SSF51556">
    <property type="entry name" value="Metallo-dependent hydrolases"/>
    <property type="match status" value="1"/>
</dbReference>
<evidence type="ECO:0000255" key="1">
    <source>
        <dbReference type="HAMAP-Rule" id="MF_01518"/>
    </source>
</evidence>
<proteinExistence type="inferred from homology"/>
<organism>
    <name type="scientific">Bradyrhizobium sp. (strain BTAi1 / ATCC BAA-1182)</name>
    <dbReference type="NCBI Taxonomy" id="288000"/>
    <lineage>
        <taxon>Bacteria</taxon>
        <taxon>Pseudomonadati</taxon>
        <taxon>Pseudomonadota</taxon>
        <taxon>Alphaproteobacteria</taxon>
        <taxon>Hyphomicrobiales</taxon>
        <taxon>Nitrobacteraceae</taxon>
        <taxon>Bradyrhizobium</taxon>
    </lineage>
</organism>
<keyword id="KW-0378">Hydrolase</keyword>
<keyword id="KW-0464">Manganese</keyword>
<keyword id="KW-1185">Reference proteome</keyword>
<accession>A5EGE2</accession>
<feature type="chain" id="PRO_0000296716" description="Adenine deaminase">
    <location>
        <begin position="1"/>
        <end position="600"/>
    </location>
</feature>
<gene>
    <name evidence="1" type="primary">ade</name>
    <name type="ordered locus">BBta_3118</name>
</gene>
<comment type="catalytic activity">
    <reaction evidence="1">
        <text>adenine + H2O + H(+) = hypoxanthine + NH4(+)</text>
        <dbReference type="Rhea" id="RHEA:23688"/>
        <dbReference type="ChEBI" id="CHEBI:15377"/>
        <dbReference type="ChEBI" id="CHEBI:15378"/>
        <dbReference type="ChEBI" id="CHEBI:16708"/>
        <dbReference type="ChEBI" id="CHEBI:17368"/>
        <dbReference type="ChEBI" id="CHEBI:28938"/>
        <dbReference type="EC" id="3.5.4.2"/>
    </reaction>
</comment>
<comment type="cofactor">
    <cofactor evidence="1">
        <name>Mn(2+)</name>
        <dbReference type="ChEBI" id="CHEBI:29035"/>
    </cofactor>
</comment>
<comment type="similarity">
    <text evidence="1">Belongs to the metallo-dependent hydrolases superfamily. Adenine deaminase family.</text>
</comment>
<reference key="1">
    <citation type="journal article" date="2007" name="Science">
        <title>Legumes symbioses: absence of nod genes in photosynthetic bradyrhizobia.</title>
        <authorList>
            <person name="Giraud E."/>
            <person name="Moulin L."/>
            <person name="Vallenet D."/>
            <person name="Barbe V."/>
            <person name="Cytryn E."/>
            <person name="Avarre J.-C."/>
            <person name="Jaubert M."/>
            <person name="Simon D."/>
            <person name="Cartieaux F."/>
            <person name="Prin Y."/>
            <person name="Bena G."/>
            <person name="Hannibal L."/>
            <person name="Fardoux J."/>
            <person name="Kojadinovic M."/>
            <person name="Vuillet L."/>
            <person name="Lajus A."/>
            <person name="Cruveiller S."/>
            <person name="Rouy Z."/>
            <person name="Mangenot S."/>
            <person name="Segurens B."/>
            <person name="Dossat C."/>
            <person name="Franck W.L."/>
            <person name="Chang W.-S."/>
            <person name="Saunders E."/>
            <person name="Bruce D."/>
            <person name="Richardson P."/>
            <person name="Normand P."/>
            <person name="Dreyfus B."/>
            <person name="Pignol D."/>
            <person name="Stacey G."/>
            <person name="Emerich D."/>
            <person name="Vermeglio A."/>
            <person name="Medigue C."/>
            <person name="Sadowsky M."/>
        </authorList>
    </citation>
    <scope>NUCLEOTIDE SEQUENCE [LARGE SCALE GENOMIC DNA]</scope>
    <source>
        <strain>BTAi1 / ATCC BAA-1182</strain>
    </source>
</reference>